<evidence type="ECO:0000250" key="1"/>
<evidence type="ECO:0000255" key="2"/>
<evidence type="ECO:0000255" key="3">
    <source>
        <dbReference type="PROSITE-ProRule" id="PRU00406"/>
    </source>
</evidence>
<evidence type="ECO:0000255" key="4">
    <source>
        <dbReference type="PROSITE-ProRule" id="PRU00410"/>
    </source>
</evidence>
<evidence type="ECO:0000256" key="5">
    <source>
        <dbReference type="SAM" id="MobiDB-lite"/>
    </source>
</evidence>
<evidence type="ECO:0000269" key="6">
    <source>
    </source>
</evidence>
<evidence type="ECO:0000269" key="7">
    <source>
    </source>
</evidence>
<evidence type="ECO:0000305" key="8"/>
<keyword id="KW-0009">Actin-binding</keyword>
<keyword id="KW-0130">Cell adhesion</keyword>
<keyword id="KW-0966">Cell projection</keyword>
<keyword id="KW-0145">Chemotaxis</keyword>
<keyword id="KW-0175">Coiled coil</keyword>
<keyword id="KW-0963">Cytoplasm</keyword>
<keyword id="KW-0206">Cytoskeleton</keyword>
<keyword id="KW-1185">Reference proteome</keyword>
<keyword id="KW-0677">Repeat</keyword>
<protein>
    <recommendedName>
        <fullName>Protein VASP homolog</fullName>
    </recommendedName>
    <alternativeName>
        <fullName>DdVASP</fullName>
    </alternativeName>
</protein>
<feature type="chain" id="PRO_0000327694" description="Protein VASP homolog">
    <location>
        <begin position="1"/>
        <end position="380"/>
    </location>
</feature>
<feature type="domain" description="WH1" evidence="4">
    <location>
        <begin position="1"/>
        <end position="110"/>
    </location>
</feature>
<feature type="domain" description="WH2" evidence="3">
    <location>
        <begin position="199"/>
        <end position="218"/>
    </location>
</feature>
<feature type="repeat" description="1">
    <location>
        <begin position="349"/>
        <end position="363"/>
    </location>
</feature>
<feature type="repeat" description="2">
    <location>
        <begin position="364"/>
        <end position="378"/>
    </location>
</feature>
<feature type="region of interest" description="Disordered" evidence="5">
    <location>
        <begin position="94"/>
        <end position="346"/>
    </location>
</feature>
<feature type="region of interest" description="EVH2">
    <location>
        <begin position="229"/>
        <end position="380"/>
    </location>
</feature>
<feature type="region of interest" description="EVH2 block A">
    <location>
        <begin position="229"/>
        <end position="249"/>
    </location>
</feature>
<feature type="region of interest" description="EVH2 block B">
    <location>
        <begin position="263"/>
        <end position="280"/>
    </location>
</feature>
<feature type="region of interest" description="EVH2 block C">
    <location>
        <begin position="348"/>
        <end position="380"/>
    </location>
</feature>
<feature type="region of interest" description="2 X 15 AA tandem repeats of [LI]-Q-[SK]-[AL]-K-[DE]-E-I-L-[ET]-[AE]-[IV]-[KR]-[ES]">
    <location>
        <begin position="349"/>
        <end position="378"/>
    </location>
</feature>
<feature type="coiled-coil region" evidence="2">
    <location>
        <begin position="350"/>
        <end position="380"/>
    </location>
</feature>
<feature type="compositionally biased region" description="Pro residues" evidence="5">
    <location>
        <begin position="115"/>
        <end position="139"/>
    </location>
</feature>
<feature type="compositionally biased region" description="Pro residues" evidence="5">
    <location>
        <begin position="166"/>
        <end position="192"/>
    </location>
</feature>
<feature type="compositionally biased region" description="Low complexity" evidence="5">
    <location>
        <begin position="233"/>
        <end position="259"/>
    </location>
</feature>
<feature type="compositionally biased region" description="Pro residues" evidence="5">
    <location>
        <begin position="294"/>
        <end position="306"/>
    </location>
</feature>
<feature type="compositionally biased region" description="Low complexity" evidence="5">
    <location>
        <begin position="307"/>
        <end position="342"/>
    </location>
</feature>
<feature type="mutagenesis site" description="Impairs actin bundling and filopodia formation without affecting actin nucleation." evidence="7">
    <location>
        <begin position="264"/>
        <end position="285"/>
    </location>
</feature>
<feature type="mutagenesis site" description="Impairs actin bundling and filopodia formation without affecting actin nucleation." evidence="7">
    <original>KRAKMK</original>
    <variation>AAAAMA</variation>
    <location>
        <begin position="275"/>
        <end position="280"/>
    </location>
</feature>
<sequence>MSETAIFNATGQVFTYSPQTRNWVPSSNVPATLQMYFNSGANTYRVIGRAGDDPNNFLINFAVKSEVVYSRASEIFHQFTDQRTHFGINFTSKQDADTFGGGFENVLRSLKGGPQQPPPQVPKPQPQQPPQPQQPPQRPPSTVIAKPVAPQAPVAPPQAPAAAPQAPAPPAAPPAPPKPPGPPPPPPAPKPPAAGGGTGRNALLGSIENFSKGGLKKTVTVDKSAGVPTKTTPSANSAASNAGSEPSSGGSTPAPAPKSSGGGGGGDLMAEVMAKRAKMKAAASQPKEESSAPTPAPTPAPTPAPTPSSTSFKPPQSFSKPATKTAAANKPPSPSLSAPLPSTVANEDLQSLKEEILTEVRKEIQKAKDEILEAIRASQH</sequence>
<comment type="function">
    <text evidence="6 7">Ena/VASP proteins are actin-associated proteins involved in a range of processes dependent on cytoskeleton remodeling and cell polarity such as lamellipodial and filopodial dynamics in migrating cells. Plays a crucial role in filopodia formation, cell-substratum adhesion, and proper chemotaxis. Nucleates and bundles actin filaments. When complexed with fotH in filopodial tips, may support formin-mediated filament elongation by bundling nascent actin filaments.</text>
</comment>
<comment type="subunit">
    <text evidence="1">May self-associate (By similarity). Binds F-actin and G-actin (By similarity). Binds to the FH2 domain of forH.</text>
</comment>
<comment type="interaction">
    <interactant intactId="EBI-1808546">
        <id>Q5TJ65</id>
    </interactant>
    <interactant intactId="EBI-1808560">
        <id>Q54N00</id>
        <label>forH</label>
    </interactant>
    <organismsDiffer>false</organismsDiffer>
    <experiments>2</experiments>
</comment>
<comment type="subcellular location">
    <subcellularLocation>
        <location>Cytoplasm</location>
        <location>Cell cortex</location>
    </subcellularLocation>
    <subcellularLocation>
        <location>Cell projection</location>
        <location>Filopodium</location>
    </subcellularLocation>
    <subcellularLocation>
        <location>Cytoplasm</location>
        <location>Cytoskeleton</location>
    </subcellularLocation>
    <text>Localizes to the leading edge of migrating cells and to the tips of filipodia. Translocates to the cell cortex in response to cAMP chemoattractant stimulation.</text>
</comment>
<comment type="developmental stage">
    <text evidence="6">Expressed in vegatatively growing cells. Expression increases upon starvation from and remains high until fruiting body formation.</text>
</comment>
<comment type="domain">
    <text evidence="1">The EVH2 domain is comprised of 3 regions. Block A is a thymosin-like domain required for G-actin binding and actin polymerization. Block B is required for F-actin binding and subcellular location, and Block C for self-association (By similarity).</text>
</comment>
<comment type="similarity">
    <text evidence="8">Belongs to the Ena/VASP family.</text>
</comment>
<dbReference type="EMBL" id="AJ786025">
    <property type="protein sequence ID" value="CAH05068.1"/>
    <property type="molecule type" value="mRNA"/>
</dbReference>
<dbReference type="EMBL" id="AAFI02000141">
    <property type="protein sequence ID" value="EAL62702.1"/>
    <property type="molecule type" value="Genomic_DNA"/>
</dbReference>
<dbReference type="RefSeq" id="XP_636196.1">
    <property type="nucleotide sequence ID" value="XM_631104.1"/>
</dbReference>
<dbReference type="SMR" id="Q5TJ65"/>
<dbReference type="DIP" id="DIP-46562N"/>
<dbReference type="FunCoup" id="Q5TJ65">
    <property type="interactions" value="2"/>
</dbReference>
<dbReference type="IntAct" id="Q5TJ65">
    <property type="interactions" value="1"/>
</dbReference>
<dbReference type="STRING" id="44689.Q5TJ65"/>
<dbReference type="GlyGen" id="Q5TJ65">
    <property type="glycosylation" value="4 sites"/>
</dbReference>
<dbReference type="PaxDb" id="44689-DDB0229340"/>
<dbReference type="EnsemblProtists" id="EAL62702">
    <property type="protein sequence ID" value="EAL62702"/>
    <property type="gene ID" value="DDB_G0289541"/>
</dbReference>
<dbReference type="GeneID" id="8627183"/>
<dbReference type="KEGG" id="ddi:DDB_G0289541"/>
<dbReference type="dictyBase" id="DDB_G0289541">
    <property type="gene designation" value="vasP"/>
</dbReference>
<dbReference type="VEuPathDB" id="AmoebaDB:DDB_G0289541"/>
<dbReference type="eggNOG" id="KOG4590">
    <property type="taxonomic scope" value="Eukaryota"/>
</dbReference>
<dbReference type="HOGENOM" id="CLU_728481_0_0_1"/>
<dbReference type="InParanoid" id="Q5TJ65"/>
<dbReference type="OMA" id="RTHFGIN"/>
<dbReference type="Reactome" id="R-DDI-446353">
    <property type="pathway name" value="Cell-extracellular matrix interactions"/>
</dbReference>
<dbReference type="Reactome" id="R-DDI-5658442">
    <property type="pathway name" value="Regulation of RAS by GAPs"/>
</dbReference>
<dbReference type="PRO" id="PR:Q5TJ65"/>
<dbReference type="Proteomes" id="UP000002195">
    <property type="component" value="Chromosome 5"/>
</dbReference>
<dbReference type="GO" id="GO:0005938">
    <property type="term" value="C:cell cortex"/>
    <property type="evidence" value="ECO:0000314"/>
    <property type="project" value="dictyBase"/>
</dbReference>
<dbReference type="GO" id="GO:0031252">
    <property type="term" value="C:cell leading edge"/>
    <property type="evidence" value="ECO:0000314"/>
    <property type="project" value="dictyBase"/>
</dbReference>
<dbReference type="GO" id="GO:0005856">
    <property type="term" value="C:cytoskeleton"/>
    <property type="evidence" value="ECO:0007669"/>
    <property type="project" value="UniProtKB-SubCell"/>
</dbReference>
<dbReference type="GO" id="GO:0005829">
    <property type="term" value="C:cytosol"/>
    <property type="evidence" value="ECO:0000314"/>
    <property type="project" value="dictyBase"/>
</dbReference>
<dbReference type="GO" id="GO:0030175">
    <property type="term" value="C:filopodium"/>
    <property type="evidence" value="ECO:0000314"/>
    <property type="project" value="dictyBase"/>
</dbReference>
<dbReference type="GO" id="GO:0032433">
    <property type="term" value="C:filopodium tip"/>
    <property type="evidence" value="ECO:0000314"/>
    <property type="project" value="dictyBase"/>
</dbReference>
<dbReference type="GO" id="GO:0044354">
    <property type="term" value="C:macropinosome"/>
    <property type="evidence" value="ECO:0000314"/>
    <property type="project" value="dictyBase"/>
</dbReference>
<dbReference type="GO" id="GO:0097203">
    <property type="term" value="C:phagocytic cup lip"/>
    <property type="evidence" value="ECO:0000314"/>
    <property type="project" value="dictyBase"/>
</dbReference>
<dbReference type="GO" id="GO:0005886">
    <property type="term" value="C:plasma membrane"/>
    <property type="evidence" value="ECO:0000318"/>
    <property type="project" value="GO_Central"/>
</dbReference>
<dbReference type="GO" id="GO:0003779">
    <property type="term" value="F:actin binding"/>
    <property type="evidence" value="ECO:0007669"/>
    <property type="project" value="UniProtKB-KW"/>
</dbReference>
<dbReference type="GO" id="GO:0017124">
    <property type="term" value="F:SH3 domain binding"/>
    <property type="evidence" value="ECO:0007669"/>
    <property type="project" value="InterPro"/>
</dbReference>
<dbReference type="GO" id="GO:0051017">
    <property type="term" value="P:actin filament bundle assembly"/>
    <property type="evidence" value="ECO:0000314"/>
    <property type="project" value="dictyBase"/>
</dbReference>
<dbReference type="GO" id="GO:0007015">
    <property type="term" value="P:actin filament organization"/>
    <property type="evidence" value="ECO:0000315"/>
    <property type="project" value="dictyBase"/>
</dbReference>
<dbReference type="GO" id="GO:0030041">
    <property type="term" value="P:actin filament polymerization"/>
    <property type="evidence" value="ECO:0000314"/>
    <property type="project" value="dictyBase"/>
</dbReference>
<dbReference type="GO" id="GO:0045010">
    <property type="term" value="P:actin nucleation"/>
    <property type="evidence" value="ECO:0000314"/>
    <property type="project" value="dictyBase"/>
</dbReference>
<dbReference type="GO" id="GO:0031589">
    <property type="term" value="P:cell-substrate adhesion"/>
    <property type="evidence" value="ECO:0000315"/>
    <property type="project" value="dictyBase"/>
</dbReference>
<dbReference type="GO" id="GO:0043327">
    <property type="term" value="P:chemotaxis to cAMP"/>
    <property type="evidence" value="ECO:0000314"/>
    <property type="project" value="dictyBase"/>
</dbReference>
<dbReference type="GO" id="GO:0046847">
    <property type="term" value="P:filopodium assembly"/>
    <property type="evidence" value="ECO:0000315"/>
    <property type="project" value="dictyBase"/>
</dbReference>
<dbReference type="GO" id="GO:0006972">
    <property type="term" value="P:hyperosmotic response"/>
    <property type="evidence" value="ECO:0000314"/>
    <property type="project" value="dictyBase"/>
</dbReference>
<dbReference type="GO" id="GO:0044351">
    <property type="term" value="P:macropinocytosis"/>
    <property type="evidence" value="ECO:0000315"/>
    <property type="project" value="dictyBase"/>
</dbReference>
<dbReference type="GO" id="GO:0050922">
    <property type="term" value="P:negative regulation of chemotaxis"/>
    <property type="evidence" value="ECO:0000315"/>
    <property type="project" value="dictyBase"/>
</dbReference>
<dbReference type="GO" id="GO:0006911">
    <property type="term" value="P:phagocytosis, engulfment"/>
    <property type="evidence" value="ECO:0000315"/>
    <property type="project" value="dictyBase"/>
</dbReference>
<dbReference type="GO" id="GO:0051289">
    <property type="term" value="P:protein homotetramerization"/>
    <property type="evidence" value="ECO:0007669"/>
    <property type="project" value="InterPro"/>
</dbReference>
<dbReference type="GO" id="GO:0072697">
    <property type="term" value="P:protein localization to cell cortex"/>
    <property type="evidence" value="ECO:0000315"/>
    <property type="project" value="dictyBase"/>
</dbReference>
<dbReference type="CDD" id="cd22062">
    <property type="entry name" value="WH2_DdVASP-like"/>
    <property type="match status" value="1"/>
</dbReference>
<dbReference type="FunFam" id="2.30.29.30:FF:000913">
    <property type="entry name" value="Protein VASP homolog"/>
    <property type="match status" value="1"/>
</dbReference>
<dbReference type="Gene3D" id="2.30.29.30">
    <property type="entry name" value="Pleckstrin-homology domain (PH domain)/Phosphotyrosine-binding domain (PTB)"/>
    <property type="match status" value="1"/>
</dbReference>
<dbReference type="Gene3D" id="1.20.5.1160">
    <property type="entry name" value="Vasodilator-stimulated phosphoprotein"/>
    <property type="match status" value="1"/>
</dbReference>
<dbReference type="InterPro" id="IPR011993">
    <property type="entry name" value="PH-like_dom_sf"/>
</dbReference>
<dbReference type="InterPro" id="IPR017354">
    <property type="entry name" value="VASP/EVL"/>
</dbReference>
<dbReference type="InterPro" id="IPR038023">
    <property type="entry name" value="VASP_sf"/>
</dbReference>
<dbReference type="InterPro" id="IPR014885">
    <property type="entry name" value="VASP_tetra"/>
</dbReference>
<dbReference type="InterPro" id="IPR000697">
    <property type="entry name" value="WH1/EVH1_dom"/>
</dbReference>
<dbReference type="InterPro" id="IPR003124">
    <property type="entry name" value="WH2_dom"/>
</dbReference>
<dbReference type="PANTHER" id="PTHR11202:SF22">
    <property type="entry name" value="PROTEIN ENABLED"/>
    <property type="match status" value="1"/>
</dbReference>
<dbReference type="PANTHER" id="PTHR11202">
    <property type="entry name" value="SPROUTY-RELATED, EVH1 DOMAIN-CONTAINING PROTEIN FAMILY MEMBER"/>
    <property type="match status" value="1"/>
</dbReference>
<dbReference type="Pfam" id="PF08776">
    <property type="entry name" value="VASP_tetra"/>
    <property type="match status" value="1"/>
</dbReference>
<dbReference type="Pfam" id="PF00568">
    <property type="entry name" value="WH1"/>
    <property type="match status" value="1"/>
</dbReference>
<dbReference type="Pfam" id="PF02205">
    <property type="entry name" value="WH2"/>
    <property type="match status" value="1"/>
</dbReference>
<dbReference type="PIRSF" id="PIRSF038010">
    <property type="entry name" value="Vasodilator_Phospo"/>
    <property type="match status" value="1"/>
</dbReference>
<dbReference type="SMART" id="SM00461">
    <property type="entry name" value="WH1"/>
    <property type="match status" value="1"/>
</dbReference>
<dbReference type="SUPFAM" id="SSF50729">
    <property type="entry name" value="PH domain-like"/>
    <property type="match status" value="1"/>
</dbReference>
<dbReference type="SUPFAM" id="SSF118370">
    <property type="entry name" value="Vasodilator-stimulated phosphoprotein, VASP, tetramerisation domain"/>
    <property type="match status" value="1"/>
</dbReference>
<dbReference type="PROSITE" id="PS50229">
    <property type="entry name" value="WH1"/>
    <property type="match status" value="1"/>
</dbReference>
<dbReference type="PROSITE" id="PS51082">
    <property type="entry name" value="WH2"/>
    <property type="match status" value="1"/>
</dbReference>
<reference key="1">
    <citation type="journal article" date="2006" name="Proc. Natl. Acad. Sci. U.S.A.">
        <title>The bundling activity of vasodilator-stimulated phosphoprotein is required for filopodium formation.</title>
        <authorList>
            <person name="Schirenbeck A."/>
            <person name="Arasada R."/>
            <person name="Bretschneider T."/>
            <person name="Stradal T.E.B."/>
            <person name="Schleicher M."/>
            <person name="Faix J."/>
        </authorList>
    </citation>
    <scope>NUCLEOTIDE SEQUENCE [MRNA]</scope>
    <scope>FUNCTION</scope>
    <scope>INTERACTION WITH FORH</scope>
    <scope>SUBCELLULAR LOCATION</scope>
    <scope>MUTAGENESIS OF 264-GLY--GLU-285 AND 275-LYS--LYS-280</scope>
    <source>
        <strain>AX2</strain>
    </source>
</reference>
<reference key="2">
    <citation type="journal article" date="2005" name="Nature">
        <title>The genome of the social amoeba Dictyostelium discoideum.</title>
        <authorList>
            <person name="Eichinger L."/>
            <person name="Pachebat J.A."/>
            <person name="Gloeckner G."/>
            <person name="Rajandream M.A."/>
            <person name="Sucgang R."/>
            <person name="Berriman M."/>
            <person name="Song J."/>
            <person name="Olsen R."/>
            <person name="Szafranski K."/>
            <person name="Xu Q."/>
            <person name="Tunggal B."/>
            <person name="Kummerfeld S."/>
            <person name="Madera M."/>
            <person name="Konfortov B.A."/>
            <person name="Rivero F."/>
            <person name="Bankier A.T."/>
            <person name="Lehmann R."/>
            <person name="Hamlin N."/>
            <person name="Davies R."/>
            <person name="Gaudet P."/>
            <person name="Fey P."/>
            <person name="Pilcher K."/>
            <person name="Chen G."/>
            <person name="Saunders D."/>
            <person name="Sodergren E.J."/>
            <person name="Davis P."/>
            <person name="Kerhornou A."/>
            <person name="Nie X."/>
            <person name="Hall N."/>
            <person name="Anjard C."/>
            <person name="Hemphill L."/>
            <person name="Bason N."/>
            <person name="Farbrother P."/>
            <person name="Desany B."/>
            <person name="Just E."/>
            <person name="Morio T."/>
            <person name="Rost R."/>
            <person name="Churcher C.M."/>
            <person name="Cooper J."/>
            <person name="Haydock S."/>
            <person name="van Driessche N."/>
            <person name="Cronin A."/>
            <person name="Goodhead I."/>
            <person name="Muzny D.M."/>
            <person name="Mourier T."/>
            <person name="Pain A."/>
            <person name="Lu M."/>
            <person name="Harper D."/>
            <person name="Lindsay R."/>
            <person name="Hauser H."/>
            <person name="James K.D."/>
            <person name="Quiles M."/>
            <person name="Madan Babu M."/>
            <person name="Saito T."/>
            <person name="Buchrieser C."/>
            <person name="Wardroper A."/>
            <person name="Felder M."/>
            <person name="Thangavelu M."/>
            <person name="Johnson D."/>
            <person name="Knights A."/>
            <person name="Loulseged H."/>
            <person name="Mungall K.L."/>
            <person name="Oliver K."/>
            <person name="Price C."/>
            <person name="Quail M.A."/>
            <person name="Urushihara H."/>
            <person name="Hernandez J."/>
            <person name="Rabbinowitsch E."/>
            <person name="Steffen D."/>
            <person name="Sanders M."/>
            <person name="Ma J."/>
            <person name="Kohara Y."/>
            <person name="Sharp S."/>
            <person name="Simmonds M.N."/>
            <person name="Spiegler S."/>
            <person name="Tivey A."/>
            <person name="Sugano S."/>
            <person name="White B."/>
            <person name="Walker D."/>
            <person name="Woodward J.R."/>
            <person name="Winckler T."/>
            <person name="Tanaka Y."/>
            <person name="Shaulsky G."/>
            <person name="Schleicher M."/>
            <person name="Weinstock G.M."/>
            <person name="Rosenthal A."/>
            <person name="Cox E.C."/>
            <person name="Chisholm R.L."/>
            <person name="Gibbs R.A."/>
            <person name="Loomis W.F."/>
            <person name="Platzer M."/>
            <person name="Kay R.R."/>
            <person name="Williams J.G."/>
            <person name="Dear P.H."/>
            <person name="Noegel A.A."/>
            <person name="Barrell B.G."/>
            <person name="Kuspa A."/>
        </authorList>
    </citation>
    <scope>NUCLEOTIDE SEQUENCE [LARGE SCALE GENOMIC DNA]</scope>
    <source>
        <strain>AX4</strain>
    </source>
</reference>
<reference key="3">
    <citation type="journal article" date="2002" name="J. Biol. Chem.">
        <title>Requirement of a vasodilator-stimulated phosphoprotein family member for cell adhesion, the formation of filopodia, and chemotaxis in dictyostelium.</title>
        <authorList>
            <person name="Han Y.-H."/>
            <person name="Chung C.Y."/>
            <person name="Wessels D."/>
            <person name="Stephens S."/>
            <person name="Titus M.A."/>
            <person name="Soll D.R."/>
            <person name="Firtel R.A."/>
        </authorList>
    </citation>
    <scope>FUNCTION</scope>
    <scope>SUBCELLULAR LOCATION</scope>
    <scope>DEVELOPMENTAL STAGE</scope>
</reference>
<organism>
    <name type="scientific">Dictyostelium discoideum</name>
    <name type="common">Social amoeba</name>
    <dbReference type="NCBI Taxonomy" id="44689"/>
    <lineage>
        <taxon>Eukaryota</taxon>
        <taxon>Amoebozoa</taxon>
        <taxon>Evosea</taxon>
        <taxon>Eumycetozoa</taxon>
        <taxon>Dictyostelia</taxon>
        <taxon>Dictyosteliales</taxon>
        <taxon>Dictyosteliaceae</taxon>
        <taxon>Dictyostelium</taxon>
    </lineage>
</organism>
<accession>Q5TJ65</accession>
<accession>Q54HE2</accession>
<gene>
    <name type="primary">vasp</name>
    <name type="ORF">DDB_G0289541</name>
</gene>
<proteinExistence type="evidence at protein level"/>
<name>VASP_DICDI</name>